<reference key="1">
    <citation type="journal article" date="2009" name="PLoS Genet.">
        <title>Organised genome dynamics in the Escherichia coli species results in highly diverse adaptive paths.</title>
        <authorList>
            <person name="Touchon M."/>
            <person name="Hoede C."/>
            <person name="Tenaillon O."/>
            <person name="Barbe V."/>
            <person name="Baeriswyl S."/>
            <person name="Bidet P."/>
            <person name="Bingen E."/>
            <person name="Bonacorsi S."/>
            <person name="Bouchier C."/>
            <person name="Bouvet O."/>
            <person name="Calteau A."/>
            <person name="Chiapello H."/>
            <person name="Clermont O."/>
            <person name="Cruveiller S."/>
            <person name="Danchin A."/>
            <person name="Diard M."/>
            <person name="Dossat C."/>
            <person name="Karoui M.E."/>
            <person name="Frapy E."/>
            <person name="Garry L."/>
            <person name="Ghigo J.M."/>
            <person name="Gilles A.M."/>
            <person name="Johnson J."/>
            <person name="Le Bouguenec C."/>
            <person name="Lescat M."/>
            <person name="Mangenot S."/>
            <person name="Martinez-Jehanne V."/>
            <person name="Matic I."/>
            <person name="Nassif X."/>
            <person name="Oztas S."/>
            <person name="Petit M.A."/>
            <person name="Pichon C."/>
            <person name="Rouy Z."/>
            <person name="Ruf C.S."/>
            <person name="Schneider D."/>
            <person name="Tourret J."/>
            <person name="Vacherie B."/>
            <person name="Vallenet D."/>
            <person name="Medigue C."/>
            <person name="Rocha E.P.C."/>
            <person name="Denamur E."/>
        </authorList>
    </citation>
    <scope>NUCLEOTIDE SEQUENCE [LARGE SCALE GENOMIC DNA]</scope>
    <source>
        <strain>55989 / EAEC</strain>
    </source>
</reference>
<sequence>MSTSDSIVSSQTKQSSWRKSDTTWTLGLFGTAIGAGVLFFPIRAGFGGLIPILLMLVLAYPIAFYCHRALARLCLSGSNPSGNITETVEEHFGKTGGVVITFLYFFAICPLLWIYGVTITNTFMTFWENQLGFAPLNRGFVALFLLLLMAFVIWFGKDLMVKVMSYLVWPFIASLVLISLSLIPYWNSAVIDQVDLGSLSLTGHDGILITVWLGISIMVFSFNFSPIVSSFVVSKREEYEKDFGRDFTERKCSQIISRASMLMVAVVMFFAFSCLFTLSPANMAEAKAQNIPVLSYLANHFASMTGTKTTFAITLEYAASIIALVAIFKSFFGHYLGTLEGLNGLILKFGYKGDKTKVSLGKLNTISMIFIMGSTWVVAYANPNILDLIEAMGAPIIASLLCLLPMYAIRKAPSLAKYRGRLDNVFVTVIGLLTILNIVYKLF</sequence>
<feature type="chain" id="PRO_1000185658" description="Threonine/serine transporter TdcC">
    <location>
        <begin position="1"/>
        <end position="443"/>
    </location>
</feature>
<feature type="transmembrane region" description="Helical" evidence="1">
    <location>
        <begin position="22"/>
        <end position="42"/>
    </location>
</feature>
<feature type="transmembrane region" description="Helical" evidence="1">
    <location>
        <begin position="44"/>
        <end position="64"/>
    </location>
</feature>
<feature type="transmembrane region" description="Helical" evidence="1">
    <location>
        <begin position="97"/>
        <end position="117"/>
    </location>
</feature>
<feature type="transmembrane region" description="Helical" evidence="1">
    <location>
        <begin position="140"/>
        <end position="160"/>
    </location>
</feature>
<feature type="transmembrane region" description="Helical" evidence="1">
    <location>
        <begin position="163"/>
        <end position="183"/>
    </location>
</feature>
<feature type="transmembrane region" description="Helical" evidence="1">
    <location>
        <begin position="207"/>
        <end position="227"/>
    </location>
</feature>
<feature type="transmembrane region" description="Helical" evidence="1">
    <location>
        <begin position="261"/>
        <end position="281"/>
    </location>
</feature>
<feature type="transmembrane region" description="Helical" evidence="1">
    <location>
        <begin position="311"/>
        <end position="331"/>
    </location>
</feature>
<feature type="transmembrane region" description="Helical" evidence="1">
    <location>
        <begin position="366"/>
        <end position="386"/>
    </location>
</feature>
<feature type="transmembrane region" description="Helical" evidence="1">
    <location>
        <begin position="389"/>
        <end position="409"/>
    </location>
</feature>
<feature type="transmembrane region" description="Helical" evidence="1">
    <location>
        <begin position="423"/>
        <end position="443"/>
    </location>
</feature>
<dbReference type="EMBL" id="CU928145">
    <property type="protein sequence ID" value="CAU99709.1"/>
    <property type="molecule type" value="Genomic_DNA"/>
</dbReference>
<dbReference type="RefSeq" id="WP_000107720.1">
    <property type="nucleotide sequence ID" value="NZ_CP028304.1"/>
</dbReference>
<dbReference type="SMR" id="B7LH53"/>
<dbReference type="GeneID" id="75205075"/>
<dbReference type="KEGG" id="eck:EC55989_3533"/>
<dbReference type="HOGENOM" id="CLU_052043_1_1_6"/>
<dbReference type="Proteomes" id="UP000000746">
    <property type="component" value="Chromosome"/>
</dbReference>
<dbReference type="GO" id="GO:0005886">
    <property type="term" value="C:plasma membrane"/>
    <property type="evidence" value="ECO:0007669"/>
    <property type="project" value="UniProtKB-SubCell"/>
</dbReference>
<dbReference type="GO" id="GO:0015194">
    <property type="term" value="F:L-serine transmembrane transporter activity"/>
    <property type="evidence" value="ECO:0007669"/>
    <property type="project" value="InterPro"/>
</dbReference>
<dbReference type="GO" id="GO:0015293">
    <property type="term" value="F:symporter activity"/>
    <property type="evidence" value="ECO:0007669"/>
    <property type="project" value="UniProtKB-UniRule"/>
</dbReference>
<dbReference type="GO" id="GO:0015565">
    <property type="term" value="F:threonine efflux transmembrane transporter activity"/>
    <property type="evidence" value="ECO:0007669"/>
    <property type="project" value="InterPro"/>
</dbReference>
<dbReference type="HAMAP" id="MF_01583">
    <property type="entry name" value="Thr_Ser_transp_TdcC"/>
    <property type="match status" value="1"/>
</dbReference>
<dbReference type="InterPro" id="IPR018227">
    <property type="entry name" value="Amino_acid_transport_2"/>
</dbReference>
<dbReference type="InterPro" id="IPR004694">
    <property type="entry name" value="Hydroxy_aa_transpt"/>
</dbReference>
<dbReference type="InterPro" id="IPR023726">
    <property type="entry name" value="Thr/Ser_transpt_TdcC"/>
</dbReference>
<dbReference type="NCBIfam" id="NF010152">
    <property type="entry name" value="PRK13629.1"/>
    <property type="match status" value="1"/>
</dbReference>
<dbReference type="NCBIfam" id="TIGR00814">
    <property type="entry name" value="stp"/>
    <property type="match status" value="1"/>
</dbReference>
<dbReference type="PANTHER" id="PTHR35334">
    <property type="entry name" value="SERINE TRANSPORTER"/>
    <property type="match status" value="1"/>
</dbReference>
<dbReference type="PANTHER" id="PTHR35334:SF1">
    <property type="entry name" value="THREONINE_SERINE TRANSPORTER TDCC"/>
    <property type="match status" value="1"/>
</dbReference>
<dbReference type="Pfam" id="PF03222">
    <property type="entry name" value="Trp_Tyr_perm"/>
    <property type="match status" value="1"/>
</dbReference>
<comment type="function">
    <text evidence="1">Involved in the import of threonine and serine into the cell, with the concomitant import of a proton (symport system).</text>
</comment>
<comment type="catalytic activity">
    <reaction evidence="1">
        <text>L-threonine(in) + H(+)(in) = L-threonine(out) + H(+)(out)</text>
        <dbReference type="Rhea" id="RHEA:28883"/>
        <dbReference type="ChEBI" id="CHEBI:15378"/>
        <dbReference type="ChEBI" id="CHEBI:57926"/>
    </reaction>
    <physiologicalReaction direction="right-to-left" evidence="1">
        <dbReference type="Rhea" id="RHEA:28885"/>
    </physiologicalReaction>
</comment>
<comment type="catalytic activity">
    <reaction evidence="1">
        <text>L-serine(in) + H(+)(in) = L-serine(out) + H(+)(out)</text>
        <dbReference type="Rhea" id="RHEA:28887"/>
        <dbReference type="ChEBI" id="CHEBI:15378"/>
        <dbReference type="ChEBI" id="CHEBI:33384"/>
    </reaction>
    <physiologicalReaction direction="right-to-left" evidence="1">
        <dbReference type="Rhea" id="RHEA:28889"/>
    </physiologicalReaction>
</comment>
<comment type="subcellular location">
    <subcellularLocation>
        <location evidence="1">Cell inner membrane</location>
        <topology evidence="1">Multi-pass membrane protein</topology>
    </subcellularLocation>
</comment>
<comment type="similarity">
    <text evidence="1">Belongs to the amino acid/polyamine transporter 2 family. SdaC/TdcC subfamily.</text>
</comment>
<protein>
    <recommendedName>
        <fullName evidence="1">Threonine/serine transporter TdcC</fullName>
    </recommendedName>
    <alternativeName>
        <fullName evidence="1">H(+)/threonine-serine symporter</fullName>
    </alternativeName>
</protein>
<accession>B7LH53</accession>
<proteinExistence type="inferred from homology"/>
<evidence type="ECO:0000255" key="1">
    <source>
        <dbReference type="HAMAP-Rule" id="MF_01583"/>
    </source>
</evidence>
<name>TDCC_ECO55</name>
<gene>
    <name evidence="1" type="primary">tdcC</name>
    <name type="ordered locus">EC55989_3533</name>
</gene>
<keyword id="KW-0029">Amino-acid transport</keyword>
<keyword id="KW-0997">Cell inner membrane</keyword>
<keyword id="KW-1003">Cell membrane</keyword>
<keyword id="KW-0472">Membrane</keyword>
<keyword id="KW-1185">Reference proteome</keyword>
<keyword id="KW-0769">Symport</keyword>
<keyword id="KW-0812">Transmembrane</keyword>
<keyword id="KW-1133">Transmembrane helix</keyword>
<keyword id="KW-0813">Transport</keyword>
<organism>
    <name type="scientific">Escherichia coli (strain 55989 / EAEC)</name>
    <dbReference type="NCBI Taxonomy" id="585055"/>
    <lineage>
        <taxon>Bacteria</taxon>
        <taxon>Pseudomonadati</taxon>
        <taxon>Pseudomonadota</taxon>
        <taxon>Gammaproteobacteria</taxon>
        <taxon>Enterobacterales</taxon>
        <taxon>Enterobacteriaceae</taxon>
        <taxon>Escherichia</taxon>
    </lineage>
</organism>